<organism>
    <name type="scientific">Streptococcus equi subsp. equi (strain 4047)</name>
    <dbReference type="NCBI Taxonomy" id="553482"/>
    <lineage>
        <taxon>Bacteria</taxon>
        <taxon>Bacillati</taxon>
        <taxon>Bacillota</taxon>
        <taxon>Bacilli</taxon>
        <taxon>Lactobacillales</taxon>
        <taxon>Streptococcaceae</taxon>
        <taxon>Streptococcus</taxon>
    </lineage>
</organism>
<evidence type="ECO:0000255" key="1">
    <source>
        <dbReference type="HAMAP-Rule" id="MF_00300"/>
    </source>
</evidence>
<feature type="chain" id="PRO_1000132788" description="Chorismate synthase">
    <location>
        <begin position="1"/>
        <end position="388"/>
    </location>
</feature>
<feature type="binding site" evidence="1">
    <location>
        <position position="39"/>
    </location>
    <ligand>
        <name>NADP(+)</name>
        <dbReference type="ChEBI" id="CHEBI:58349"/>
    </ligand>
</feature>
<feature type="binding site" evidence="1">
    <location>
        <position position="45"/>
    </location>
    <ligand>
        <name>NADP(+)</name>
        <dbReference type="ChEBI" id="CHEBI:58349"/>
    </ligand>
</feature>
<feature type="binding site" evidence="1">
    <location>
        <begin position="130"/>
        <end position="132"/>
    </location>
    <ligand>
        <name>FMN</name>
        <dbReference type="ChEBI" id="CHEBI:58210"/>
    </ligand>
</feature>
<feature type="binding site" evidence="1">
    <location>
        <begin position="251"/>
        <end position="252"/>
    </location>
    <ligand>
        <name>FMN</name>
        <dbReference type="ChEBI" id="CHEBI:58210"/>
    </ligand>
</feature>
<feature type="binding site" evidence="1">
    <location>
        <position position="296"/>
    </location>
    <ligand>
        <name>FMN</name>
        <dbReference type="ChEBI" id="CHEBI:58210"/>
    </ligand>
</feature>
<feature type="binding site" evidence="1">
    <location>
        <begin position="311"/>
        <end position="315"/>
    </location>
    <ligand>
        <name>FMN</name>
        <dbReference type="ChEBI" id="CHEBI:58210"/>
    </ligand>
</feature>
<feature type="binding site" evidence="1">
    <location>
        <position position="337"/>
    </location>
    <ligand>
        <name>FMN</name>
        <dbReference type="ChEBI" id="CHEBI:58210"/>
    </ligand>
</feature>
<comment type="function">
    <text evidence="1">Catalyzes the anti-1,4-elimination of the C-3 phosphate and the C-6 proR hydrogen from 5-enolpyruvylshikimate-3-phosphate (EPSP) to yield chorismate, which is the branch point compound that serves as the starting substrate for the three terminal pathways of aromatic amino acid biosynthesis. This reaction introduces a second double bond into the aromatic ring system.</text>
</comment>
<comment type="catalytic activity">
    <reaction evidence="1">
        <text>5-O-(1-carboxyvinyl)-3-phosphoshikimate = chorismate + phosphate</text>
        <dbReference type="Rhea" id="RHEA:21020"/>
        <dbReference type="ChEBI" id="CHEBI:29748"/>
        <dbReference type="ChEBI" id="CHEBI:43474"/>
        <dbReference type="ChEBI" id="CHEBI:57701"/>
        <dbReference type="EC" id="4.2.3.5"/>
    </reaction>
</comment>
<comment type="cofactor">
    <cofactor evidence="1">
        <name>FMNH2</name>
        <dbReference type="ChEBI" id="CHEBI:57618"/>
    </cofactor>
    <text evidence="1">Reduced FMN (FMNH(2)).</text>
</comment>
<comment type="pathway">
    <text evidence="1">Metabolic intermediate biosynthesis; chorismate biosynthesis; chorismate from D-erythrose 4-phosphate and phosphoenolpyruvate: step 7/7.</text>
</comment>
<comment type="subunit">
    <text evidence="1">Homotetramer.</text>
</comment>
<comment type="similarity">
    <text evidence="1">Belongs to the chorismate synthase family.</text>
</comment>
<dbReference type="EC" id="4.2.3.5" evidence="1"/>
<dbReference type="EMBL" id="FM204883">
    <property type="protein sequence ID" value="CAW93563.1"/>
    <property type="molecule type" value="Genomic_DNA"/>
</dbReference>
<dbReference type="RefSeq" id="WP_012679443.1">
    <property type="nucleotide sequence ID" value="NC_012471.1"/>
</dbReference>
<dbReference type="SMR" id="C0M8T9"/>
<dbReference type="KEGG" id="seu:SEQ_0992"/>
<dbReference type="HOGENOM" id="CLU_034547_2_0_9"/>
<dbReference type="OrthoDB" id="9771806at2"/>
<dbReference type="UniPathway" id="UPA00053">
    <property type="reaction ID" value="UER00090"/>
</dbReference>
<dbReference type="Proteomes" id="UP000001365">
    <property type="component" value="Chromosome"/>
</dbReference>
<dbReference type="GO" id="GO:0005829">
    <property type="term" value="C:cytosol"/>
    <property type="evidence" value="ECO:0007669"/>
    <property type="project" value="TreeGrafter"/>
</dbReference>
<dbReference type="GO" id="GO:0004107">
    <property type="term" value="F:chorismate synthase activity"/>
    <property type="evidence" value="ECO:0007669"/>
    <property type="project" value="UniProtKB-UniRule"/>
</dbReference>
<dbReference type="GO" id="GO:0010181">
    <property type="term" value="F:FMN binding"/>
    <property type="evidence" value="ECO:0007669"/>
    <property type="project" value="TreeGrafter"/>
</dbReference>
<dbReference type="GO" id="GO:0008652">
    <property type="term" value="P:amino acid biosynthetic process"/>
    <property type="evidence" value="ECO:0007669"/>
    <property type="project" value="UniProtKB-KW"/>
</dbReference>
<dbReference type="GO" id="GO:0009073">
    <property type="term" value="P:aromatic amino acid family biosynthetic process"/>
    <property type="evidence" value="ECO:0007669"/>
    <property type="project" value="UniProtKB-KW"/>
</dbReference>
<dbReference type="GO" id="GO:0009423">
    <property type="term" value="P:chorismate biosynthetic process"/>
    <property type="evidence" value="ECO:0007669"/>
    <property type="project" value="UniProtKB-UniRule"/>
</dbReference>
<dbReference type="CDD" id="cd07304">
    <property type="entry name" value="Chorismate_synthase"/>
    <property type="match status" value="1"/>
</dbReference>
<dbReference type="FunFam" id="3.60.150.10:FF:000002">
    <property type="entry name" value="Chorismate synthase"/>
    <property type="match status" value="1"/>
</dbReference>
<dbReference type="Gene3D" id="3.60.150.10">
    <property type="entry name" value="Chorismate synthase AroC"/>
    <property type="match status" value="1"/>
</dbReference>
<dbReference type="HAMAP" id="MF_00300">
    <property type="entry name" value="Chorismate_synth"/>
    <property type="match status" value="1"/>
</dbReference>
<dbReference type="InterPro" id="IPR000453">
    <property type="entry name" value="Chorismate_synth"/>
</dbReference>
<dbReference type="InterPro" id="IPR035904">
    <property type="entry name" value="Chorismate_synth_AroC_sf"/>
</dbReference>
<dbReference type="InterPro" id="IPR020541">
    <property type="entry name" value="Chorismate_synthase_CS"/>
</dbReference>
<dbReference type="NCBIfam" id="TIGR00033">
    <property type="entry name" value="aroC"/>
    <property type="match status" value="1"/>
</dbReference>
<dbReference type="NCBIfam" id="NF003793">
    <property type="entry name" value="PRK05382.1"/>
    <property type="match status" value="1"/>
</dbReference>
<dbReference type="PANTHER" id="PTHR21085">
    <property type="entry name" value="CHORISMATE SYNTHASE"/>
    <property type="match status" value="1"/>
</dbReference>
<dbReference type="PANTHER" id="PTHR21085:SF0">
    <property type="entry name" value="CHORISMATE SYNTHASE"/>
    <property type="match status" value="1"/>
</dbReference>
<dbReference type="Pfam" id="PF01264">
    <property type="entry name" value="Chorismate_synt"/>
    <property type="match status" value="1"/>
</dbReference>
<dbReference type="PIRSF" id="PIRSF001456">
    <property type="entry name" value="Chorismate_synth"/>
    <property type="match status" value="1"/>
</dbReference>
<dbReference type="SUPFAM" id="SSF103263">
    <property type="entry name" value="Chorismate synthase, AroC"/>
    <property type="match status" value="1"/>
</dbReference>
<dbReference type="PROSITE" id="PS00787">
    <property type="entry name" value="CHORISMATE_SYNTHASE_1"/>
    <property type="match status" value="1"/>
</dbReference>
<dbReference type="PROSITE" id="PS00788">
    <property type="entry name" value="CHORISMATE_SYNTHASE_2"/>
    <property type="match status" value="1"/>
</dbReference>
<dbReference type="PROSITE" id="PS00789">
    <property type="entry name" value="CHORISMATE_SYNTHASE_3"/>
    <property type="match status" value="1"/>
</dbReference>
<keyword id="KW-0028">Amino-acid biosynthesis</keyword>
<keyword id="KW-0057">Aromatic amino acid biosynthesis</keyword>
<keyword id="KW-0274">FAD</keyword>
<keyword id="KW-0285">Flavoprotein</keyword>
<keyword id="KW-0288">FMN</keyword>
<keyword id="KW-0456">Lyase</keyword>
<keyword id="KW-0521">NADP</keyword>
<sequence>MRYLTAGESHGQALTAIIEGIPAGLALSAELINKELKRRQGGYGRGARMRIESDRVHISSGVRHGKTTGAPITLTIQNKDHQKWLDIMAVEAVEEQIKFKRKITRPRPGHADLVGGIKYRFDDLRNALERSSARETAMRVAVGAIAKAILTELGIETANHVLVFGGIEVAVPEAMSFADIKKVAESSDLSIVNPKQEATIKAHIDQVKKEGDTLGGIIETLIHGLPAGLGSYVQWDRKLDAKIAQAVLSINAFKGVEFGMGFDMGYQKGSQVMDDIIWHETSGYSRRTNRLGGFEAGMTTGQPIVVKGVMKPIPTLYKPLMSVDTETHEPYKATVERSDPTALPAAGVVMENVVATVITKEILEQFPSDNMTDLKQAFFAYRDYVHHF</sequence>
<gene>
    <name evidence="1" type="primary">aroC</name>
    <name type="ordered locus">SEQ_0992</name>
</gene>
<name>AROC_STRE4</name>
<accession>C0M8T9</accession>
<reference key="1">
    <citation type="journal article" date="2009" name="PLoS Pathog.">
        <title>Genomic evidence for the evolution of Streptococcus equi: host restriction, increased virulence, and genetic exchange with human pathogens.</title>
        <authorList>
            <person name="Holden M.T.G."/>
            <person name="Heather Z."/>
            <person name="Paillot R."/>
            <person name="Steward K.F."/>
            <person name="Webb K."/>
            <person name="Ainslie F."/>
            <person name="Jourdan T."/>
            <person name="Bason N.C."/>
            <person name="Holroyd N.E."/>
            <person name="Mungall K."/>
            <person name="Quail M.A."/>
            <person name="Sanders M."/>
            <person name="Simmonds M."/>
            <person name="Willey D."/>
            <person name="Brooks K."/>
            <person name="Aanensen D.M."/>
            <person name="Spratt B.G."/>
            <person name="Jolley K.A."/>
            <person name="Maiden M.C.J."/>
            <person name="Kehoe M."/>
            <person name="Chanter N."/>
            <person name="Bentley S.D."/>
            <person name="Robinson C."/>
            <person name="Maskell D.J."/>
            <person name="Parkhill J."/>
            <person name="Waller A.S."/>
        </authorList>
    </citation>
    <scope>NUCLEOTIDE SEQUENCE [LARGE SCALE GENOMIC DNA]</scope>
    <source>
        <strain>4047</strain>
    </source>
</reference>
<protein>
    <recommendedName>
        <fullName evidence="1">Chorismate synthase</fullName>
        <shortName evidence="1">CS</shortName>
        <ecNumber evidence="1">4.2.3.5</ecNumber>
    </recommendedName>
    <alternativeName>
        <fullName evidence="1">5-enolpyruvylshikimate-3-phosphate phospholyase</fullName>
    </alternativeName>
</protein>
<proteinExistence type="inferred from homology"/>